<dbReference type="EC" id="2.7.11.1"/>
<dbReference type="EMBL" id="AB011421">
    <property type="protein sequence ID" value="BAA34127.1"/>
    <property type="molecule type" value="mRNA"/>
</dbReference>
<dbReference type="EMBL" id="BC016040">
    <property type="protein sequence ID" value="AAH16040.1"/>
    <property type="molecule type" value="mRNA"/>
</dbReference>
<dbReference type="CCDS" id="CCDS2315.1"/>
<dbReference type="RefSeq" id="NP_004217.1">
    <property type="nucleotide sequence ID" value="NM_004226.4"/>
</dbReference>
<dbReference type="RefSeq" id="XP_011510470.1">
    <property type="nucleotide sequence ID" value="XM_011512168.2"/>
</dbReference>
<dbReference type="RefSeq" id="XP_011510471.1">
    <property type="nucleotide sequence ID" value="XM_011512169.2"/>
</dbReference>
<dbReference type="RefSeq" id="XP_011510472.1">
    <property type="nucleotide sequence ID" value="XM_011512170.2"/>
</dbReference>
<dbReference type="RefSeq" id="XP_047302289.1">
    <property type="nucleotide sequence ID" value="XM_047446333.1"/>
</dbReference>
<dbReference type="RefSeq" id="XP_047302290.1">
    <property type="nucleotide sequence ID" value="XM_047446334.1"/>
</dbReference>
<dbReference type="RefSeq" id="XP_054200533.1">
    <property type="nucleotide sequence ID" value="XM_054344558.1"/>
</dbReference>
<dbReference type="RefSeq" id="XP_054200534.1">
    <property type="nucleotide sequence ID" value="XM_054344559.1"/>
</dbReference>
<dbReference type="RefSeq" id="XP_054200535.1">
    <property type="nucleotide sequence ID" value="XM_054344560.1"/>
</dbReference>
<dbReference type="RefSeq" id="XP_054200536.1">
    <property type="nucleotide sequence ID" value="XM_054344561.1"/>
</dbReference>
<dbReference type="RefSeq" id="XP_054200537.1">
    <property type="nucleotide sequence ID" value="XM_054344562.1"/>
</dbReference>
<dbReference type="PDB" id="3LM0">
    <property type="method" value="X-ray"/>
    <property type="resolution" value="2.35 A"/>
    <property type="chains" value="A=25-329"/>
</dbReference>
<dbReference type="PDB" id="3LM5">
    <property type="method" value="X-ray"/>
    <property type="resolution" value="2.29 A"/>
    <property type="chains" value="A=25-329"/>
</dbReference>
<dbReference type="PDB" id="6QF4">
    <property type="method" value="X-ray"/>
    <property type="resolution" value="2.50 A"/>
    <property type="chains" value="A=18-329"/>
</dbReference>
<dbReference type="PDB" id="6Y6F">
    <property type="method" value="X-ray"/>
    <property type="resolution" value="1.98 A"/>
    <property type="chains" value="A=25-329"/>
</dbReference>
<dbReference type="PDB" id="6Y6H">
    <property type="method" value="X-ray"/>
    <property type="resolution" value="1.95 A"/>
    <property type="chains" value="A=25-329"/>
</dbReference>
<dbReference type="PDB" id="6ZJF">
    <property type="method" value="X-ray"/>
    <property type="resolution" value="1.75 A"/>
    <property type="chains" value="A=25-329"/>
</dbReference>
<dbReference type="PDB" id="7AKG">
    <property type="method" value="X-ray"/>
    <property type="resolution" value="2.08 A"/>
    <property type="chains" value="A=25-329"/>
</dbReference>
<dbReference type="PDB" id="7Q7C">
    <property type="method" value="X-ray"/>
    <property type="resolution" value="2.85 A"/>
    <property type="chains" value="A=25-329"/>
</dbReference>
<dbReference type="PDB" id="7Q7D">
    <property type="method" value="X-ray"/>
    <property type="resolution" value="2.60 A"/>
    <property type="chains" value="A=25-329"/>
</dbReference>
<dbReference type="PDB" id="7Q7E">
    <property type="method" value="X-ray"/>
    <property type="resolution" value="2.85 A"/>
    <property type="chains" value="A=25-329"/>
</dbReference>
<dbReference type="PDBsum" id="3LM0"/>
<dbReference type="PDBsum" id="3LM5"/>
<dbReference type="PDBsum" id="6QF4"/>
<dbReference type="PDBsum" id="6Y6F"/>
<dbReference type="PDBsum" id="6Y6H"/>
<dbReference type="PDBsum" id="6ZJF"/>
<dbReference type="PDBsum" id="7AKG"/>
<dbReference type="PDBsum" id="7Q7C"/>
<dbReference type="PDBsum" id="7Q7D"/>
<dbReference type="PDBsum" id="7Q7E"/>
<dbReference type="SMR" id="O94768"/>
<dbReference type="BioGRID" id="114684">
    <property type="interactions" value="60"/>
</dbReference>
<dbReference type="FunCoup" id="O94768">
    <property type="interactions" value="2246"/>
</dbReference>
<dbReference type="IntAct" id="O94768">
    <property type="interactions" value="40"/>
</dbReference>
<dbReference type="STRING" id="9606.ENSP00000263955"/>
<dbReference type="BindingDB" id="O94768"/>
<dbReference type="ChEMBL" id="CHEMBL3980"/>
<dbReference type="DrugBank" id="DB12010">
    <property type="generic name" value="Fostamatinib"/>
</dbReference>
<dbReference type="DrugBank" id="DB04216">
    <property type="generic name" value="Quercetin"/>
</dbReference>
<dbReference type="DrugCentral" id="O94768"/>
<dbReference type="GlyGen" id="O94768">
    <property type="glycosylation" value="1 site, 1 O-linked glycan (1 site)"/>
</dbReference>
<dbReference type="iPTMnet" id="O94768"/>
<dbReference type="PhosphoSitePlus" id="O94768"/>
<dbReference type="BioMuta" id="STK17B"/>
<dbReference type="CPTAC" id="CPTAC-1034"/>
<dbReference type="CPTAC" id="non-CPTAC-3107"/>
<dbReference type="jPOST" id="O94768"/>
<dbReference type="MassIVE" id="O94768"/>
<dbReference type="PaxDb" id="9606-ENSP00000263955"/>
<dbReference type="PeptideAtlas" id="O94768"/>
<dbReference type="ProteomicsDB" id="50432"/>
<dbReference type="Pumba" id="O94768"/>
<dbReference type="Antibodypedia" id="19872">
    <property type="antibodies" value="414 antibodies from 42 providers"/>
</dbReference>
<dbReference type="DNASU" id="9262"/>
<dbReference type="Ensembl" id="ENST00000263955.9">
    <property type="protein sequence ID" value="ENSP00000263955.4"/>
    <property type="gene ID" value="ENSG00000081320.12"/>
</dbReference>
<dbReference type="Ensembl" id="ENST00000409228.5">
    <property type="protein sequence ID" value="ENSP00000386853.1"/>
    <property type="gene ID" value="ENSG00000081320.12"/>
</dbReference>
<dbReference type="Ensembl" id="ENST00000420683.2">
    <property type="protein sequence ID" value="ENSP00000399755.2"/>
    <property type="gene ID" value="ENSG00000081320.12"/>
</dbReference>
<dbReference type="Ensembl" id="ENST00000449152.2">
    <property type="protein sequence ID" value="ENSP00000413289.2"/>
    <property type="gene ID" value="ENSG00000081320.12"/>
</dbReference>
<dbReference type="Ensembl" id="ENST00000714417.1">
    <property type="protein sequence ID" value="ENSP00000519687.1"/>
    <property type="gene ID" value="ENSG00000081320.12"/>
</dbReference>
<dbReference type="GeneID" id="9262"/>
<dbReference type="KEGG" id="hsa:9262"/>
<dbReference type="MANE-Select" id="ENST00000263955.9">
    <property type="protein sequence ID" value="ENSP00000263955.4"/>
    <property type="RefSeq nucleotide sequence ID" value="NM_004226.4"/>
    <property type="RefSeq protein sequence ID" value="NP_004217.1"/>
</dbReference>
<dbReference type="AGR" id="HGNC:11396"/>
<dbReference type="CTD" id="9262"/>
<dbReference type="DisGeNET" id="9262"/>
<dbReference type="GeneCards" id="STK17B"/>
<dbReference type="HGNC" id="HGNC:11396">
    <property type="gene designation" value="STK17B"/>
</dbReference>
<dbReference type="HPA" id="ENSG00000081320">
    <property type="expression patterns" value="Group enriched (bone marrow, lymphoid tissue)"/>
</dbReference>
<dbReference type="MIM" id="604727">
    <property type="type" value="gene"/>
</dbReference>
<dbReference type="neXtProt" id="NX_O94768"/>
<dbReference type="OpenTargets" id="ENSG00000081320"/>
<dbReference type="PharmGKB" id="PA36204"/>
<dbReference type="VEuPathDB" id="HostDB:ENSG00000081320"/>
<dbReference type="eggNOG" id="KOG0032">
    <property type="taxonomic scope" value="Eukaryota"/>
</dbReference>
<dbReference type="GeneTree" id="ENSGT00940000154014"/>
<dbReference type="HOGENOM" id="CLU_000288_63_0_1"/>
<dbReference type="InParanoid" id="O94768"/>
<dbReference type="OMA" id="LSHPWLW"/>
<dbReference type="OrthoDB" id="504170at2759"/>
<dbReference type="PAN-GO" id="O94768">
    <property type="GO annotations" value="4 GO annotations based on evolutionary models"/>
</dbReference>
<dbReference type="PhylomeDB" id="O94768"/>
<dbReference type="TreeFam" id="TF314166"/>
<dbReference type="BRENDA" id="2.7.11.1">
    <property type="organism ID" value="2681"/>
</dbReference>
<dbReference type="PathwayCommons" id="O94768"/>
<dbReference type="SignaLink" id="O94768"/>
<dbReference type="SIGNOR" id="O94768"/>
<dbReference type="BioGRID-ORCS" id="9262">
    <property type="hits" value="10 hits in 1195 CRISPR screens"/>
</dbReference>
<dbReference type="ChiTaRS" id="STK17B">
    <property type="organism name" value="human"/>
</dbReference>
<dbReference type="EvolutionaryTrace" id="O94768"/>
<dbReference type="GenomeRNAi" id="9262"/>
<dbReference type="Pharos" id="O94768">
    <property type="development level" value="Tchem"/>
</dbReference>
<dbReference type="PRO" id="PR:O94768"/>
<dbReference type="Proteomes" id="UP000005640">
    <property type="component" value="Chromosome 2"/>
</dbReference>
<dbReference type="RNAct" id="O94768">
    <property type="molecule type" value="protein"/>
</dbReference>
<dbReference type="Bgee" id="ENSG00000081320">
    <property type="expression patterns" value="Expressed in epithelium of nasopharynx and 174 other cell types or tissues"/>
</dbReference>
<dbReference type="ExpressionAtlas" id="O94768">
    <property type="expression patterns" value="baseline and differential"/>
</dbReference>
<dbReference type="GO" id="GO:0015629">
    <property type="term" value="C:actin cytoskeleton"/>
    <property type="evidence" value="ECO:0007669"/>
    <property type="project" value="Ensembl"/>
</dbReference>
<dbReference type="GO" id="GO:0005793">
    <property type="term" value="C:endoplasmic reticulum-Golgi intermediate compartment"/>
    <property type="evidence" value="ECO:0007669"/>
    <property type="project" value="UniProtKB-SubCell"/>
</dbReference>
<dbReference type="GO" id="GO:0090543">
    <property type="term" value="C:Flemming body"/>
    <property type="evidence" value="ECO:0000314"/>
    <property type="project" value="HPA"/>
</dbReference>
<dbReference type="GO" id="GO:0005654">
    <property type="term" value="C:nucleoplasm"/>
    <property type="evidence" value="ECO:0000314"/>
    <property type="project" value="HPA"/>
</dbReference>
<dbReference type="GO" id="GO:0005634">
    <property type="term" value="C:nucleus"/>
    <property type="evidence" value="ECO:0000314"/>
    <property type="project" value="UniProtKB"/>
</dbReference>
<dbReference type="GO" id="GO:0005886">
    <property type="term" value="C:plasma membrane"/>
    <property type="evidence" value="ECO:0007669"/>
    <property type="project" value="UniProtKB-SubCell"/>
</dbReference>
<dbReference type="GO" id="GO:0005524">
    <property type="term" value="F:ATP binding"/>
    <property type="evidence" value="ECO:0000314"/>
    <property type="project" value="UniProtKB"/>
</dbReference>
<dbReference type="GO" id="GO:0004672">
    <property type="term" value="F:protein kinase activity"/>
    <property type="evidence" value="ECO:0000250"/>
    <property type="project" value="UniProtKB"/>
</dbReference>
<dbReference type="GO" id="GO:0106310">
    <property type="term" value="F:protein serine kinase activity"/>
    <property type="evidence" value="ECO:0007669"/>
    <property type="project" value="RHEA"/>
</dbReference>
<dbReference type="GO" id="GO:0004674">
    <property type="term" value="F:protein serine/threonine kinase activity"/>
    <property type="evidence" value="ECO:0000314"/>
    <property type="project" value="UniProtKB"/>
</dbReference>
<dbReference type="GO" id="GO:0006915">
    <property type="term" value="P:apoptotic process"/>
    <property type="evidence" value="ECO:0007669"/>
    <property type="project" value="UniProtKB-KW"/>
</dbReference>
<dbReference type="GO" id="GO:0035556">
    <property type="term" value="P:intracellular signal transduction"/>
    <property type="evidence" value="ECO:0000314"/>
    <property type="project" value="UniProtKB"/>
</dbReference>
<dbReference type="GO" id="GO:0043065">
    <property type="term" value="P:positive regulation of apoptotic process"/>
    <property type="evidence" value="ECO:0000318"/>
    <property type="project" value="GO_Central"/>
</dbReference>
<dbReference type="GO" id="GO:2000271">
    <property type="term" value="P:positive regulation of fibroblast apoptotic process"/>
    <property type="evidence" value="ECO:0000315"/>
    <property type="project" value="UniProtKB"/>
</dbReference>
<dbReference type="GO" id="GO:0046777">
    <property type="term" value="P:protein autophosphorylation"/>
    <property type="evidence" value="ECO:0000250"/>
    <property type="project" value="UniProtKB"/>
</dbReference>
<dbReference type="GO" id="GO:0006468">
    <property type="term" value="P:protein phosphorylation"/>
    <property type="evidence" value="ECO:0000314"/>
    <property type="project" value="UniProtKB"/>
</dbReference>
<dbReference type="CDD" id="cd14198">
    <property type="entry name" value="STKc_DRAK2"/>
    <property type="match status" value="1"/>
</dbReference>
<dbReference type="FunFam" id="3.30.200.20:FF:000175">
    <property type="entry name" value="Serine/threonine-protein kinase 17B"/>
    <property type="match status" value="1"/>
</dbReference>
<dbReference type="FunFam" id="1.10.510.10:FF:000422">
    <property type="entry name" value="serine/threonine-protein kinase 17B"/>
    <property type="match status" value="1"/>
</dbReference>
<dbReference type="Gene3D" id="3.30.200.20">
    <property type="entry name" value="Phosphorylase Kinase, domain 1"/>
    <property type="match status" value="1"/>
</dbReference>
<dbReference type="Gene3D" id="1.10.510.10">
    <property type="entry name" value="Transferase(Phosphotransferase) domain 1"/>
    <property type="match status" value="1"/>
</dbReference>
<dbReference type="InterPro" id="IPR011009">
    <property type="entry name" value="Kinase-like_dom_sf"/>
</dbReference>
<dbReference type="InterPro" id="IPR000719">
    <property type="entry name" value="Prot_kinase_dom"/>
</dbReference>
<dbReference type="InterPro" id="IPR017441">
    <property type="entry name" value="Protein_kinase_ATP_BS"/>
</dbReference>
<dbReference type="InterPro" id="IPR008271">
    <property type="entry name" value="Ser/Thr_kinase_AS"/>
</dbReference>
<dbReference type="InterPro" id="IPR042763">
    <property type="entry name" value="ST17B_STKc"/>
</dbReference>
<dbReference type="PANTHER" id="PTHR24342">
    <property type="entry name" value="SERINE/THREONINE-PROTEIN KINASE 17"/>
    <property type="match status" value="1"/>
</dbReference>
<dbReference type="PANTHER" id="PTHR24342:SF5">
    <property type="entry name" value="SERINE_THREONINE-PROTEIN KINASE 17B"/>
    <property type="match status" value="1"/>
</dbReference>
<dbReference type="Pfam" id="PF00069">
    <property type="entry name" value="Pkinase"/>
    <property type="match status" value="1"/>
</dbReference>
<dbReference type="SMART" id="SM00220">
    <property type="entry name" value="S_TKc"/>
    <property type="match status" value="1"/>
</dbReference>
<dbReference type="SUPFAM" id="SSF56112">
    <property type="entry name" value="Protein kinase-like (PK-like)"/>
    <property type="match status" value="1"/>
</dbReference>
<dbReference type="PROSITE" id="PS00107">
    <property type="entry name" value="PROTEIN_KINASE_ATP"/>
    <property type="match status" value="1"/>
</dbReference>
<dbReference type="PROSITE" id="PS50011">
    <property type="entry name" value="PROTEIN_KINASE_DOM"/>
    <property type="match status" value="1"/>
</dbReference>
<dbReference type="PROSITE" id="PS00108">
    <property type="entry name" value="PROTEIN_KINASE_ST"/>
    <property type="match status" value="1"/>
</dbReference>
<sequence>MSRRRFDCRSISGLLTTTPQIPIKMENFNNFYILTSKELGRGKFAVVRQCISKSTGQEYAAKFLKKRRRGQDCRAEILHEIAVLELAKSCPRVINLHEVYENTSEIILILEYAAGGEIFSLCLPELAEMVSENDVIRLIKQILEGVYYLHQNNIVHLDLKPQNILLSSIYPLGDIKIVDFGMSRKIGHACELREIMGTPEYLAPEILNYDPITTATDMWNIGIIAYMLLTHTSPFVGEDNQETYLNISQVNVDYSEETFSSVSQLATDFIQSLLVKNPEKRPTAEICLSHSWLQQWDFENLFHPEETSSSSQTQDHSVRSSEDKTSKSSCNGTCGDREDKENIPEDSSMVSKRFRFDDSLPNPHELVSDLLC</sequence>
<gene>
    <name type="primary">STK17B</name>
    <name type="synonym">DRAK2</name>
</gene>
<accession>O94768</accession>
<organism>
    <name type="scientific">Homo sapiens</name>
    <name type="common">Human</name>
    <dbReference type="NCBI Taxonomy" id="9606"/>
    <lineage>
        <taxon>Eukaryota</taxon>
        <taxon>Metazoa</taxon>
        <taxon>Chordata</taxon>
        <taxon>Craniata</taxon>
        <taxon>Vertebrata</taxon>
        <taxon>Euteleostomi</taxon>
        <taxon>Mammalia</taxon>
        <taxon>Eutheria</taxon>
        <taxon>Euarchontoglires</taxon>
        <taxon>Primates</taxon>
        <taxon>Haplorrhini</taxon>
        <taxon>Catarrhini</taxon>
        <taxon>Hominidae</taxon>
        <taxon>Homo</taxon>
    </lineage>
</organism>
<feature type="chain" id="PRO_0000086706" description="Serine/threonine-protein kinase 17B">
    <location>
        <begin position="1"/>
        <end position="372"/>
    </location>
</feature>
<feature type="domain" description="Protein kinase" evidence="2">
    <location>
        <begin position="33"/>
        <end position="293"/>
    </location>
</feature>
<feature type="region of interest" description="Disordered" evidence="4">
    <location>
        <begin position="305"/>
        <end position="362"/>
    </location>
</feature>
<feature type="compositionally biased region" description="Basic and acidic residues" evidence="4">
    <location>
        <begin position="316"/>
        <end position="326"/>
    </location>
</feature>
<feature type="active site" description="Proton acceptor" evidence="2 3">
    <location>
        <position position="158"/>
    </location>
</feature>
<feature type="binding site" evidence="2">
    <location>
        <begin position="39"/>
        <end position="47"/>
    </location>
    <ligand>
        <name>ATP</name>
        <dbReference type="ChEBI" id="CHEBI:30616"/>
    </ligand>
</feature>
<feature type="binding site">
    <location>
        <position position="62"/>
    </location>
    <ligand>
        <name>ATP</name>
        <dbReference type="ChEBI" id="CHEBI:30616"/>
    </ligand>
</feature>
<feature type="sequence variant" id="VAR_041147" description="In dbSNP:rs34740616." evidence="5">
    <original>S</original>
    <variation>F</variation>
    <location>
        <position position="320"/>
    </location>
</feature>
<feature type="mutagenesis site" description="Loss of activity and of apoptotic function." evidence="6">
    <original>K</original>
    <variation>A</variation>
    <location>
        <position position="62"/>
    </location>
</feature>
<feature type="helix" evidence="9">
    <location>
        <begin position="25"/>
        <end position="31"/>
    </location>
</feature>
<feature type="strand" evidence="9">
    <location>
        <begin position="32"/>
        <end position="41"/>
    </location>
</feature>
<feature type="strand" evidence="9">
    <location>
        <begin position="43"/>
        <end position="52"/>
    </location>
</feature>
<feature type="turn" evidence="9">
    <location>
        <begin position="53"/>
        <end position="55"/>
    </location>
</feature>
<feature type="strand" evidence="9">
    <location>
        <begin position="58"/>
        <end position="68"/>
    </location>
</feature>
<feature type="helix" evidence="9">
    <location>
        <begin position="74"/>
        <end position="86"/>
    </location>
</feature>
<feature type="helix" evidence="9">
    <location>
        <begin position="87"/>
        <end position="89"/>
    </location>
</feature>
<feature type="strand" evidence="9">
    <location>
        <begin position="96"/>
        <end position="101"/>
    </location>
</feature>
<feature type="strand" evidence="9">
    <location>
        <begin position="103"/>
        <end position="111"/>
    </location>
</feature>
<feature type="helix" evidence="9">
    <location>
        <begin position="118"/>
        <end position="122"/>
    </location>
</feature>
<feature type="helix" evidence="9">
    <location>
        <begin position="124"/>
        <end position="129"/>
    </location>
</feature>
<feature type="helix" evidence="9">
    <location>
        <begin position="132"/>
        <end position="151"/>
    </location>
</feature>
<feature type="helix" evidence="9">
    <location>
        <begin position="161"/>
        <end position="163"/>
    </location>
</feature>
<feature type="strand" evidence="9">
    <location>
        <begin position="164"/>
        <end position="167"/>
    </location>
</feature>
<feature type="turn" evidence="9">
    <location>
        <begin position="169"/>
        <end position="172"/>
    </location>
</feature>
<feature type="strand" evidence="9">
    <location>
        <begin position="175"/>
        <end position="177"/>
    </location>
</feature>
<feature type="helix" evidence="8">
    <location>
        <begin position="180"/>
        <end position="182"/>
    </location>
</feature>
<feature type="helix" evidence="9">
    <location>
        <begin position="194"/>
        <end position="196"/>
    </location>
</feature>
<feature type="helix" evidence="9">
    <location>
        <begin position="199"/>
        <end position="201"/>
    </location>
</feature>
<feature type="helix" evidence="9">
    <location>
        <begin position="204"/>
        <end position="207"/>
    </location>
</feature>
<feature type="helix" evidence="9">
    <location>
        <begin position="214"/>
        <end position="230"/>
    </location>
</feature>
<feature type="helix" evidence="9">
    <location>
        <begin position="240"/>
        <end position="249"/>
    </location>
</feature>
<feature type="helix" evidence="9">
    <location>
        <begin position="256"/>
        <end position="259"/>
    </location>
</feature>
<feature type="helix" evidence="9">
    <location>
        <begin position="264"/>
        <end position="273"/>
    </location>
</feature>
<feature type="helix" evidence="9">
    <location>
        <begin position="278"/>
        <end position="280"/>
    </location>
</feature>
<feature type="helix" evidence="9">
    <location>
        <begin position="284"/>
        <end position="288"/>
    </location>
</feature>
<feature type="helix" evidence="9">
    <location>
        <begin position="291"/>
        <end position="293"/>
    </location>
</feature>
<evidence type="ECO:0000250" key="1"/>
<evidence type="ECO:0000255" key="2">
    <source>
        <dbReference type="PROSITE-ProRule" id="PRU00159"/>
    </source>
</evidence>
<evidence type="ECO:0000255" key="3">
    <source>
        <dbReference type="PROSITE-ProRule" id="PRU10027"/>
    </source>
</evidence>
<evidence type="ECO:0000256" key="4">
    <source>
        <dbReference type="SAM" id="MobiDB-lite"/>
    </source>
</evidence>
<evidence type="ECO:0000269" key="5">
    <source>
    </source>
</evidence>
<evidence type="ECO:0000269" key="6">
    <source>
    </source>
</evidence>
<evidence type="ECO:0000305" key="7"/>
<evidence type="ECO:0007829" key="8">
    <source>
        <dbReference type="PDB" id="3LM5"/>
    </source>
</evidence>
<evidence type="ECO:0007829" key="9">
    <source>
        <dbReference type="PDB" id="6ZJF"/>
    </source>
</evidence>
<proteinExistence type="evidence at protein level"/>
<reference key="1">
    <citation type="journal article" date="1998" name="J. Biol. Chem.">
        <title>DRAKs, novel serine/threonine kinases related to death-associated protein kinase that trigger apoptosis.</title>
        <authorList>
            <person name="Sanjo H."/>
            <person name="Kawai T."/>
            <person name="Akira S."/>
        </authorList>
    </citation>
    <scope>NUCLEOTIDE SEQUENCE [MRNA]</scope>
    <scope>FUNCTION</scope>
    <scope>SUBCELLULAR LOCATION</scope>
    <scope>TISSUE SPECIFICITY</scope>
    <scope>MUTAGENESIS OF LYS-62</scope>
    <source>
        <tissue>Liver</tissue>
        <tissue>Placenta</tissue>
    </source>
</reference>
<reference key="2">
    <citation type="journal article" date="2004" name="Genome Res.">
        <title>The status, quality, and expansion of the NIH full-length cDNA project: the Mammalian Gene Collection (MGC).</title>
        <authorList>
            <consortium name="The MGC Project Team"/>
        </authorList>
    </citation>
    <scope>NUCLEOTIDE SEQUENCE [LARGE SCALE MRNA]</scope>
    <source>
        <tissue>B-cell</tissue>
    </source>
</reference>
<reference key="3">
    <citation type="journal article" date="2009" name="Mol. Cell. Proteomics">
        <title>Large-scale proteomics analysis of the human kinome.</title>
        <authorList>
            <person name="Oppermann F.S."/>
            <person name="Gnad F."/>
            <person name="Olsen J.V."/>
            <person name="Hornberger R."/>
            <person name="Greff Z."/>
            <person name="Keri G."/>
            <person name="Mann M."/>
            <person name="Daub H."/>
        </authorList>
    </citation>
    <scope>IDENTIFICATION BY MASS SPECTROMETRY [LARGE SCALE ANALYSIS]</scope>
</reference>
<reference key="4">
    <citation type="journal article" date="2009" name="Sci. Signal.">
        <title>Quantitative phosphoproteomic analysis of T cell receptor signaling reveals system-wide modulation of protein-protein interactions.</title>
        <authorList>
            <person name="Mayya V."/>
            <person name="Lundgren D.H."/>
            <person name="Hwang S.-I."/>
            <person name="Rezaul K."/>
            <person name="Wu L."/>
            <person name="Eng J.K."/>
            <person name="Rodionov V."/>
            <person name="Han D.K."/>
        </authorList>
    </citation>
    <scope>IDENTIFICATION BY MASS SPECTROMETRY [LARGE SCALE ANALYSIS]</scope>
    <source>
        <tissue>Leukemic T-cell</tissue>
    </source>
</reference>
<reference key="5">
    <citation type="journal article" date="2007" name="Nature">
        <title>Patterns of somatic mutation in human cancer genomes.</title>
        <authorList>
            <person name="Greenman C."/>
            <person name="Stephens P."/>
            <person name="Smith R."/>
            <person name="Dalgliesh G.L."/>
            <person name="Hunter C."/>
            <person name="Bignell G."/>
            <person name="Davies H."/>
            <person name="Teague J."/>
            <person name="Butler A."/>
            <person name="Stevens C."/>
            <person name="Edkins S."/>
            <person name="O'Meara S."/>
            <person name="Vastrik I."/>
            <person name="Schmidt E.E."/>
            <person name="Avis T."/>
            <person name="Barthorpe S."/>
            <person name="Bhamra G."/>
            <person name="Buck G."/>
            <person name="Choudhury B."/>
            <person name="Clements J."/>
            <person name="Cole J."/>
            <person name="Dicks E."/>
            <person name="Forbes S."/>
            <person name="Gray K."/>
            <person name="Halliday K."/>
            <person name="Harrison R."/>
            <person name="Hills K."/>
            <person name="Hinton J."/>
            <person name="Jenkinson A."/>
            <person name="Jones D."/>
            <person name="Menzies A."/>
            <person name="Mironenko T."/>
            <person name="Perry J."/>
            <person name="Raine K."/>
            <person name="Richardson D."/>
            <person name="Shepherd R."/>
            <person name="Small A."/>
            <person name="Tofts C."/>
            <person name="Varian J."/>
            <person name="Webb T."/>
            <person name="West S."/>
            <person name="Widaa S."/>
            <person name="Yates A."/>
            <person name="Cahill D.P."/>
            <person name="Louis D.N."/>
            <person name="Goldstraw P."/>
            <person name="Nicholson A.G."/>
            <person name="Brasseur F."/>
            <person name="Looijenga L."/>
            <person name="Weber B.L."/>
            <person name="Chiew Y.-E."/>
            <person name="DeFazio A."/>
            <person name="Greaves M.F."/>
            <person name="Green A.R."/>
            <person name="Campbell P."/>
            <person name="Birney E."/>
            <person name="Easton D.F."/>
            <person name="Chenevix-Trench G."/>
            <person name="Tan M.-H."/>
            <person name="Khoo S.K."/>
            <person name="Teh B.T."/>
            <person name="Yuen S.T."/>
            <person name="Leung S.Y."/>
            <person name="Wooster R."/>
            <person name="Futreal P.A."/>
            <person name="Stratton M.R."/>
        </authorList>
    </citation>
    <scope>VARIANT [LARGE SCALE ANALYSIS] PHE-320</scope>
</reference>
<protein>
    <recommendedName>
        <fullName>Serine/threonine-protein kinase 17B</fullName>
        <ecNumber>2.7.11.1</ecNumber>
    </recommendedName>
    <alternativeName>
        <fullName>DAP kinase-related apoptosis-inducing protein kinase 2</fullName>
    </alternativeName>
</protein>
<keyword id="KW-0002">3D-structure</keyword>
<keyword id="KW-0053">Apoptosis</keyword>
<keyword id="KW-0067">ATP-binding</keyword>
<keyword id="KW-1003">Cell membrane</keyword>
<keyword id="KW-0418">Kinase</keyword>
<keyword id="KW-0472">Membrane</keyword>
<keyword id="KW-0547">Nucleotide-binding</keyword>
<keyword id="KW-0539">Nucleus</keyword>
<keyword id="KW-0597">Phosphoprotein</keyword>
<keyword id="KW-1267">Proteomics identification</keyword>
<keyword id="KW-1185">Reference proteome</keyword>
<keyword id="KW-0723">Serine/threonine-protein kinase</keyword>
<keyword id="KW-0808">Transferase</keyword>
<comment type="function">
    <text evidence="1 6">Phosphorylates myosin light chains (By similarity). Acts as a positive regulator of apoptosis.</text>
</comment>
<comment type="catalytic activity">
    <reaction>
        <text>L-seryl-[protein] + ATP = O-phospho-L-seryl-[protein] + ADP + H(+)</text>
        <dbReference type="Rhea" id="RHEA:17989"/>
        <dbReference type="Rhea" id="RHEA-COMP:9863"/>
        <dbReference type="Rhea" id="RHEA-COMP:11604"/>
        <dbReference type="ChEBI" id="CHEBI:15378"/>
        <dbReference type="ChEBI" id="CHEBI:29999"/>
        <dbReference type="ChEBI" id="CHEBI:30616"/>
        <dbReference type="ChEBI" id="CHEBI:83421"/>
        <dbReference type="ChEBI" id="CHEBI:456216"/>
        <dbReference type="EC" id="2.7.11.1"/>
    </reaction>
</comment>
<comment type="catalytic activity">
    <reaction>
        <text>L-threonyl-[protein] + ATP = O-phospho-L-threonyl-[protein] + ADP + H(+)</text>
        <dbReference type="Rhea" id="RHEA:46608"/>
        <dbReference type="Rhea" id="RHEA-COMP:11060"/>
        <dbReference type="Rhea" id="RHEA-COMP:11605"/>
        <dbReference type="ChEBI" id="CHEBI:15378"/>
        <dbReference type="ChEBI" id="CHEBI:30013"/>
        <dbReference type="ChEBI" id="CHEBI:30616"/>
        <dbReference type="ChEBI" id="CHEBI:61977"/>
        <dbReference type="ChEBI" id="CHEBI:456216"/>
        <dbReference type="EC" id="2.7.11.1"/>
    </reaction>
</comment>
<comment type="subunit">
    <text evidence="1">Interacts with CHP1; the interaction induces CHP1 to translocate from the Golgi to the nucleus.</text>
</comment>
<comment type="subcellular location">
    <subcellularLocation>
        <location evidence="6">Nucleus</location>
    </subcellularLocation>
    <subcellularLocation>
        <location evidence="1">Cell membrane</location>
    </subcellularLocation>
    <subcellularLocation>
        <location evidence="1">Endoplasmic reticulum-Golgi intermediate compartment</location>
    </subcellularLocation>
    <text evidence="1">Colocalizes with STK17B at the plasma membrane.</text>
</comment>
<comment type="tissue specificity">
    <text evidence="6">Highly expressed in placenta, lung, pancreas. Lower levels in heart, brain, liver, skeletal muscle and kidney.</text>
</comment>
<comment type="PTM">
    <text>Autophosphorylated.</text>
</comment>
<comment type="similarity">
    <text evidence="7">Belongs to the protein kinase superfamily. CAMK Ser/Thr protein kinase family. DAP kinase subfamily.</text>
</comment>
<name>ST17B_HUMAN</name>